<accession>C5P311</accession>
<dbReference type="EMBL" id="ACFW01000014">
    <property type="protein sequence ID" value="EER28699.1"/>
    <property type="status" value="ALT_INIT"/>
    <property type="molecule type" value="Genomic_DNA"/>
</dbReference>
<dbReference type="RefSeq" id="XP_003070844.1">
    <property type="nucleotide sequence ID" value="XM_003070798.1"/>
</dbReference>
<dbReference type="SMR" id="C5P311"/>
<dbReference type="GlyCosmos" id="C5P311">
    <property type="glycosylation" value="3 sites, No reported glycans"/>
</dbReference>
<dbReference type="GeneID" id="9696338"/>
<dbReference type="KEGG" id="cpw:9696338"/>
<dbReference type="HOGENOM" id="CLU_000700_0_0_1"/>
<dbReference type="OrthoDB" id="443634at2759"/>
<dbReference type="Proteomes" id="UP000009084">
    <property type="component" value="Unassembled WGS sequence"/>
</dbReference>
<dbReference type="GO" id="GO:0005829">
    <property type="term" value="C:cytosol"/>
    <property type="evidence" value="ECO:0007669"/>
    <property type="project" value="GOC"/>
</dbReference>
<dbReference type="GO" id="GO:0005794">
    <property type="term" value="C:Golgi apparatus"/>
    <property type="evidence" value="ECO:0007669"/>
    <property type="project" value="UniProtKB-SubCell"/>
</dbReference>
<dbReference type="GO" id="GO:0016020">
    <property type="term" value="C:membrane"/>
    <property type="evidence" value="ECO:0007669"/>
    <property type="project" value="UniProtKB-KW"/>
</dbReference>
<dbReference type="GO" id="GO:0006895">
    <property type="term" value="P:Golgi to endosome transport"/>
    <property type="evidence" value="ECO:0007669"/>
    <property type="project" value="TreeGrafter"/>
</dbReference>
<dbReference type="GO" id="GO:0006896">
    <property type="term" value="P:Golgi to vacuole transport"/>
    <property type="evidence" value="ECO:0007669"/>
    <property type="project" value="TreeGrafter"/>
</dbReference>
<dbReference type="GO" id="GO:0006623">
    <property type="term" value="P:protein targeting to vacuole"/>
    <property type="evidence" value="ECO:0007669"/>
    <property type="project" value="TreeGrafter"/>
</dbReference>
<dbReference type="CDD" id="cd15482">
    <property type="entry name" value="Sialidase_non-viral"/>
    <property type="match status" value="1"/>
</dbReference>
<dbReference type="FunFam" id="3.30.60.270:FF:000005">
    <property type="entry name" value="Sortilin"/>
    <property type="match status" value="2"/>
</dbReference>
<dbReference type="FunFam" id="2.10.70.80:FF:000001">
    <property type="entry name" value="Sortilin-related VPS10 domain-containing receptor 1"/>
    <property type="match status" value="1"/>
</dbReference>
<dbReference type="Gene3D" id="2.10.70.80">
    <property type="match status" value="2"/>
</dbReference>
<dbReference type="Gene3D" id="3.30.60.270">
    <property type="match status" value="2"/>
</dbReference>
<dbReference type="Gene3D" id="2.130.10.10">
    <property type="entry name" value="YVTN repeat-like/Quinoprotein amine dehydrogenase"/>
    <property type="match status" value="2"/>
</dbReference>
<dbReference type="InterPro" id="IPR031777">
    <property type="entry name" value="Sortilin_C"/>
</dbReference>
<dbReference type="InterPro" id="IPR031778">
    <property type="entry name" value="Sortilin_N"/>
</dbReference>
<dbReference type="InterPro" id="IPR006581">
    <property type="entry name" value="VPS10"/>
</dbReference>
<dbReference type="InterPro" id="IPR050310">
    <property type="entry name" value="VPS10-sortilin"/>
</dbReference>
<dbReference type="InterPro" id="IPR015943">
    <property type="entry name" value="WD40/YVTN_repeat-like_dom_sf"/>
</dbReference>
<dbReference type="PANTHER" id="PTHR12106">
    <property type="entry name" value="SORTILIN RELATED"/>
    <property type="match status" value="1"/>
</dbReference>
<dbReference type="PANTHER" id="PTHR12106:SF27">
    <property type="entry name" value="SORTILIN-RELATED RECEPTOR"/>
    <property type="match status" value="1"/>
</dbReference>
<dbReference type="Pfam" id="PF15902">
    <property type="entry name" value="Sortilin-Vps10"/>
    <property type="match status" value="2"/>
</dbReference>
<dbReference type="Pfam" id="PF15901">
    <property type="entry name" value="Sortilin_C"/>
    <property type="match status" value="2"/>
</dbReference>
<dbReference type="SMART" id="SM00602">
    <property type="entry name" value="VPS10"/>
    <property type="match status" value="2"/>
</dbReference>
<dbReference type="SUPFAM" id="SSF110296">
    <property type="entry name" value="Oligoxyloglucan reducing end-specific cellobiohydrolase"/>
    <property type="match status" value="2"/>
</dbReference>
<organism>
    <name type="scientific">Coccidioides posadasii (strain C735)</name>
    <name type="common">Valley fever fungus</name>
    <dbReference type="NCBI Taxonomy" id="222929"/>
    <lineage>
        <taxon>Eukaryota</taxon>
        <taxon>Fungi</taxon>
        <taxon>Dikarya</taxon>
        <taxon>Ascomycota</taxon>
        <taxon>Pezizomycotina</taxon>
        <taxon>Eurotiomycetes</taxon>
        <taxon>Eurotiomycetidae</taxon>
        <taxon>Onygenales</taxon>
        <taxon>Onygenaceae</taxon>
        <taxon>Coccidioides</taxon>
    </lineage>
</organism>
<protein>
    <recommendedName>
        <fullName>Vacuolar protein sorting/targeting protein 10</fullName>
    </recommendedName>
    <alternativeName>
        <fullName>Carboxypeptidase Y receptor</fullName>
        <shortName>CPY receptor</shortName>
    </alternativeName>
    <alternativeName>
        <fullName>Sortilin VPS10</fullName>
    </alternativeName>
    <alternativeName>
        <fullName>Vacuolar carboxypeptidase sorting receptor VPS10</fullName>
    </alternativeName>
</protein>
<comment type="function">
    <text evidence="1">Functions as a sorting receptor in the Golgi compartment required for the intracellular sorting and delivery of soluble vacuolar proteins, like carboxypeptidase Y (CPY) and proteinase A. Executes multiple rounds of sorting by cycling between the late Golgi and a prevacuolar endosome-like compartment (By similarity).</text>
</comment>
<comment type="subcellular location">
    <subcellularLocation>
        <location evidence="1">Golgi apparatus</location>
        <location evidence="1">trans-Golgi network membrane</location>
        <topology evidence="1">Multi-pass membrane protein</topology>
    </subcellularLocation>
    <subcellularLocation>
        <location evidence="1">Prevacuolar compartment membrane</location>
        <topology evidence="1">Multi-pass membrane protein</topology>
    </subcellularLocation>
    <text evidence="1">Cycles between the Golgi apparatus and the prevacuolar compartment.</text>
</comment>
<comment type="similarity">
    <text evidence="3">Belongs to the VPS10-related sortilin family.</text>
</comment>
<comment type="sequence caution" evidence="3">
    <conflict type="erroneous initiation">
        <sequence resource="EMBL-CDS" id="EER28699"/>
    </conflict>
    <text>Extended N-terminus.</text>
</comment>
<keyword id="KW-0325">Glycoprotein</keyword>
<keyword id="KW-0333">Golgi apparatus</keyword>
<keyword id="KW-0472">Membrane</keyword>
<keyword id="KW-0653">Protein transport</keyword>
<keyword id="KW-0675">Receptor</keyword>
<keyword id="KW-0677">Repeat</keyword>
<keyword id="KW-0732">Signal</keyword>
<keyword id="KW-0812">Transmembrane</keyword>
<keyword id="KW-1133">Transmembrane helix</keyword>
<keyword id="KW-0813">Transport</keyword>
<feature type="signal peptide" evidence="2">
    <location>
        <begin position="1"/>
        <end position="20"/>
    </location>
</feature>
<feature type="chain" id="PRO_0000407514" description="Vacuolar protein sorting/targeting protein 10">
    <location>
        <begin position="21"/>
        <end position="1486"/>
    </location>
</feature>
<feature type="topological domain" description="Lumenal" evidence="2">
    <location>
        <begin position="21"/>
        <end position="1356"/>
    </location>
</feature>
<feature type="transmembrane region" description="Helical" evidence="2">
    <location>
        <begin position="1357"/>
        <end position="1377"/>
    </location>
</feature>
<feature type="topological domain" description="Cytoplasmic" evidence="2">
    <location>
        <begin position="1378"/>
        <end position="1405"/>
    </location>
</feature>
<feature type="transmembrane region" description="Helical" evidence="2">
    <location>
        <begin position="1406"/>
        <end position="1426"/>
    </location>
</feature>
<feature type="topological domain" description="Lumenal" evidence="2">
    <location>
        <begin position="1427"/>
        <end position="1486"/>
    </location>
</feature>
<feature type="repeat" description="BNR 1">
    <location>
        <begin position="57"/>
        <end position="66"/>
    </location>
</feature>
<feature type="repeat" description="BNR 2">
    <location>
        <begin position="376"/>
        <end position="385"/>
    </location>
</feature>
<feature type="repeat" description="BNR 3">
    <location>
        <begin position="436"/>
        <end position="445"/>
    </location>
</feature>
<feature type="repeat" description="BNR 4">
    <location>
        <begin position="478"/>
        <end position="487"/>
    </location>
</feature>
<feature type="repeat" description="BNR 5">
    <location>
        <begin position="718"/>
        <end position="728"/>
    </location>
</feature>
<feature type="repeat" description="BNR 6">
    <location>
        <begin position="817"/>
        <end position="826"/>
    </location>
</feature>
<feature type="repeat" description="BNR 7">
    <location>
        <begin position="1100"/>
        <end position="1110"/>
    </location>
</feature>
<feature type="repeat" description="BNR 8">
    <location>
        <begin position="1141"/>
        <end position="1150"/>
    </location>
</feature>
<feature type="glycosylation site" description="N-linked (GlcNAc...) asparagine" evidence="2">
    <location>
        <position position="295"/>
    </location>
</feature>
<feature type="glycosylation site" description="N-linked (GlcNAc...) asparagine" evidence="2">
    <location>
        <position position="966"/>
    </location>
</feature>
<feature type="glycosylation site" description="N-linked (GlcNAc...) asparagine" evidence="2">
    <location>
        <position position="1262"/>
    </location>
</feature>
<proteinExistence type="inferred from homology"/>
<gene>
    <name type="primary">VPS10</name>
    <name type="ORF">CPC735_039630</name>
</gene>
<reference key="1">
    <citation type="journal article" date="2009" name="Genome Res.">
        <title>Comparative genomic analyses of the human fungal pathogens Coccidioides and their relatives.</title>
        <authorList>
            <person name="Sharpton T.J."/>
            <person name="Stajich J.E."/>
            <person name="Rounsley S.D."/>
            <person name="Gardner M.J."/>
            <person name="Wortman J.R."/>
            <person name="Jordar V.S."/>
            <person name="Maiti R."/>
            <person name="Kodira C.D."/>
            <person name="Neafsey D.E."/>
            <person name="Zeng Q."/>
            <person name="Hung C.-Y."/>
            <person name="McMahan C."/>
            <person name="Muszewska A."/>
            <person name="Grynberg M."/>
            <person name="Mandel M.A."/>
            <person name="Kellner E.M."/>
            <person name="Barker B.M."/>
            <person name="Galgiani J.N."/>
            <person name="Orbach M.J."/>
            <person name="Kirkland T.N."/>
            <person name="Cole G.T."/>
            <person name="Henn M.R."/>
            <person name="Birren B.W."/>
            <person name="Taylor J.W."/>
        </authorList>
    </citation>
    <scope>NUCLEOTIDE SEQUENCE [LARGE SCALE GENOMIC DNA]</scope>
    <source>
        <strain>C735</strain>
    </source>
</reference>
<sequence length="1486" mass="167179">MILRRLLLAGSLLLASFATAKKDGPKIEVTELEHEPKHLFYFEDSDVVMLQHKYDAYISTDAGVSWAPVKGPDDHMKGKVKAIYHHPYDRTKAYVLGQERTHWTTDDTGKSWREFTIDQALPRSGNPLSFHGKDSNKVILHTIECSGFICQMPALYTTDGFKSHKILTKAQHGCSWAISTPEFAAREEFPENVDNRILCMFTGLHSPIGTQKRLLYSDDFFEGDRGTEVPLNNGRPVSDIVSMVGVKKFLVAAARSPRTNELALYVSDDASRWHQALFDGHRLENNGYTILESTNYSIQVGVKTSGGFNPMSALFTSNSDGVSFTRNAEHLNANNLGYVDFEKIAGIQGIFLVNTVTNWEEIEEHHGGKKKIVSKISFDDGRTFHDIKAGDKNLHLHSVTHIHNTGRVFSSPAPGLVMGVGNVGDSLKEYDDGDLYVSDNAGITWWRALEDAHKYEFGDQGSVLVAVYDEGRTNKISYSLNHGKDWKTAELPVKIRARTLTTTPDSTSLKFLLLGTGKGSSERKHYVIALDFSDVHERKCSKDDFERWPARLNEKEEPDCLMGHKQFYRRRKGKSECFIGEEFKDPVPELERCKCTEEDFECDFNFVRSEDRKDCVPARSLPVPEGQCKKPEDKYTGSSGFRLIPGDDCIKEGGLELDKPKERSCSDTAKEPVSGEIGVSIQHFDANKPAEYYYMERPTLSKDKDETVMLLTDKLEVFMTKDHGKTWQQILAGKNIAKLWPHTYNNDIMYYVTGEKKVFLTKNRGDSFREFETKLPPNRDRLPVLAFHPDPERSEWLIWTGADNCERGGDCHSVAHYSTDGGDEWHTLMRYVGRCEFVGKGGVRKTDELIFCAQHENEDPKNKHFRLLSSENWFTNKKIHYKDILDFRTMAEFIIVAARAGKDSLKVGASIDGDTFADAEFPPNFDVKTQQAYTVLDSSTHSVWLHVTVHNVPDHQFGSIIKSNSNGTSYVLSLSNVNRNNADYVDFEKMQGLEGVALVNVVANVDEVVKGAAKKLRTMITHNDGAEWDYVRPPAMDADGRKYGCSPGKKGTAECGLHLHSYTERRDFRDTFSSPSAVGLMLAVGNVGDHLTLKSEGDTFITRDGGIEWHSVKKGNYIWEYGDQGSIIVIVPESKPTKTIFYTLDEGRTWIEFEFTKVEMQISDITTVPSDTSRNFLLWGTEVGSGAKPGFATVNLDFSGLKERSKKCVLKEEKPEADDYYIWEPKHPLLEDNCLFGHVARYHRKKPDSQCFNGGEFEKLHNVSTNCPCTRQDYECDYNYERQSDGSCALVEGLQPLDPKRICTEDPNAIEYYEPTGYRRIPLTTCEHGVKLDGFKAFPCPNKEKEFEKKHPGLRGVGLFFAIVIPIAAAAAVGYWVYNRWDGKFGRIRLGETSRSGSWLSRDSPLVVVPVAIIAGTVAVMSALPLLAASLWRSFRGWMPVGRGSSRPYSSRGAFAARRGDYVGVVEDEDELLGAEDFDGDEDEEV</sequence>
<name>VPS10_COCP7</name>
<evidence type="ECO:0000250" key="1"/>
<evidence type="ECO:0000255" key="2"/>
<evidence type="ECO:0000305" key="3"/>